<evidence type="ECO:0000255" key="1">
    <source>
        <dbReference type="HAMAP-Rule" id="MF_03124"/>
    </source>
</evidence>
<name>ARGJ_ASPTN</name>
<protein>
    <recommendedName>
        <fullName evidence="1">Arginine biosynthesis bifunctional protein ArgJ, mitochondrial</fullName>
    </recommendedName>
    <domain>
        <recommendedName>
            <fullName evidence="1">Glutamate N-acetyltransferase</fullName>
            <shortName evidence="1">GAT</shortName>
            <ecNumber evidence="1">2.3.1.35</ecNumber>
        </recommendedName>
        <alternativeName>
            <fullName evidence="1">Ornithine acetyltransferase</fullName>
            <shortName evidence="1">OATase</shortName>
        </alternativeName>
        <alternativeName>
            <fullName evidence="1">Ornithine transacetylase</fullName>
        </alternativeName>
    </domain>
    <domain>
        <recommendedName>
            <fullName evidence="1">Amino-acid acetyltransferase</fullName>
            <ecNumber evidence="1">2.3.1.1</ecNumber>
        </recommendedName>
        <alternativeName>
            <fullName evidence="1">N-acetylglutamate synthase</fullName>
            <shortName evidence="1">AGS</shortName>
        </alternativeName>
    </domain>
    <component>
        <recommendedName>
            <fullName evidence="1">Arginine biosynthesis bifunctional protein ArgJ alpha chain</fullName>
        </recommendedName>
    </component>
    <component>
        <recommendedName>
            <fullName evidence="1">Arginine biosynthesis bifunctional protein ArgJ beta chain</fullName>
        </recommendedName>
    </component>
</protein>
<sequence>MAVFARMVKGQVRHYSAPVDMAIPASKRKFIPSSGSYPKGFLVSGTHVGVKASNTKFPDLALISSETPCSAAAVFTTNKFQAAPVQVSRDILKTRQGHGIRSVVINSGCANAVTGKGGLEDAVAMGKKVDECNGLNEPSTLVMSTGVIGQRLPISKILNNIPAAHTNLSSTHDAWLSTARAICTTDTFPKLLSRTFTLPSSPERTYRLAGMTKGAGMIHPNMATLLGVLCTDAPVEPSALQSLLKYAVARSFNSISIDGDTSTNDTVAILANGAAGGAPVTSSAASPDYTALQDILTSFTQSLSQLVVRDGEGATKFVTVRVQNSPHYESARLIASTIARSPLVKTALYGRDANWGRILCAIGYTQGVAPGTVVPERTSVSFKPVDGSPILKLLVNGEPEQVDEERASVILQEEDLEIVVDLGGGEKGEQGLGGEEAVYWFCDFSHEYVTINGDYRT</sequence>
<reference key="1">
    <citation type="submission" date="2005-09" db="EMBL/GenBank/DDBJ databases">
        <title>Annotation of the Aspergillus terreus NIH2624 genome.</title>
        <authorList>
            <person name="Birren B.W."/>
            <person name="Lander E.S."/>
            <person name="Galagan J.E."/>
            <person name="Nusbaum C."/>
            <person name="Devon K."/>
            <person name="Henn M."/>
            <person name="Ma L.-J."/>
            <person name="Jaffe D.B."/>
            <person name="Butler J."/>
            <person name="Alvarez P."/>
            <person name="Gnerre S."/>
            <person name="Grabherr M."/>
            <person name="Kleber M."/>
            <person name="Mauceli E.W."/>
            <person name="Brockman W."/>
            <person name="Rounsley S."/>
            <person name="Young S.K."/>
            <person name="LaButti K."/>
            <person name="Pushparaj V."/>
            <person name="DeCaprio D."/>
            <person name="Crawford M."/>
            <person name="Koehrsen M."/>
            <person name="Engels R."/>
            <person name="Montgomery P."/>
            <person name="Pearson M."/>
            <person name="Howarth C."/>
            <person name="Larson L."/>
            <person name="Luoma S."/>
            <person name="White J."/>
            <person name="Alvarado L."/>
            <person name="Kodira C.D."/>
            <person name="Zeng Q."/>
            <person name="Oleary S."/>
            <person name="Yandava C."/>
            <person name="Denning D.W."/>
            <person name="Nierman W.C."/>
            <person name="Milne T."/>
            <person name="Madden K."/>
        </authorList>
    </citation>
    <scope>NUCLEOTIDE SEQUENCE [LARGE SCALE GENOMIC DNA]</scope>
    <source>
        <strain>NIH 2624 / FGSC A1156</strain>
    </source>
</reference>
<accession>Q0CDB9</accession>
<gene>
    <name type="ORF">ATEG_08315</name>
</gene>
<feature type="chain" id="PRO_0000398024" description="Arginine biosynthesis bifunctional protein ArgJ alpha chain" evidence="1">
    <location>
        <begin position="1"/>
        <end position="223"/>
    </location>
</feature>
<feature type="chain" id="PRO_0000398025" description="Arginine biosynthesis bifunctional protein ArgJ beta chain" evidence="1">
    <location>
        <begin position="224"/>
        <end position="457"/>
    </location>
</feature>
<feature type="active site" description="Nucleophile" evidence="1">
    <location>
        <position position="224"/>
    </location>
</feature>
<feature type="binding site" evidence="1">
    <location>
        <position position="184"/>
    </location>
    <ligand>
        <name>substrate</name>
    </ligand>
</feature>
<feature type="binding site" evidence="1">
    <location>
        <position position="213"/>
    </location>
    <ligand>
        <name>substrate</name>
    </ligand>
</feature>
<feature type="binding site" evidence="1">
    <location>
        <position position="224"/>
    </location>
    <ligand>
        <name>substrate</name>
    </ligand>
</feature>
<feature type="binding site" evidence="1">
    <location>
        <position position="312"/>
    </location>
    <ligand>
        <name>substrate</name>
    </ligand>
</feature>
<feature type="binding site" evidence="1">
    <location>
        <position position="452"/>
    </location>
    <ligand>
        <name>substrate</name>
    </ligand>
</feature>
<feature type="binding site" evidence="1">
    <location>
        <position position="457"/>
    </location>
    <ligand>
        <name>substrate</name>
    </ligand>
</feature>
<feature type="site" description="Involved in the stabilization of negative charge on the oxyanion by the formation of the oxyanion hole" evidence="1">
    <location>
        <position position="145"/>
    </location>
</feature>
<feature type="site" description="Involved in the stabilization of negative charge on the oxyanion by the formation of the oxyanion hole" evidence="1">
    <location>
        <position position="146"/>
    </location>
</feature>
<feature type="site" description="Cleavage; by autolysis" evidence="1">
    <location>
        <begin position="223"/>
        <end position="224"/>
    </location>
</feature>
<comment type="function">
    <text evidence="1">Catalyzes two activities which are involved in the cyclic version of arginine biosynthesis: the synthesis of acetylglutamate from glutamate and acetyl-CoA, and of ornithine by transacetylation between acetylornithine and glutamate.</text>
</comment>
<comment type="catalytic activity">
    <reaction evidence="1">
        <text>N(2)-acetyl-L-ornithine + L-glutamate = N-acetyl-L-glutamate + L-ornithine</text>
        <dbReference type="Rhea" id="RHEA:15349"/>
        <dbReference type="ChEBI" id="CHEBI:29985"/>
        <dbReference type="ChEBI" id="CHEBI:44337"/>
        <dbReference type="ChEBI" id="CHEBI:46911"/>
        <dbReference type="ChEBI" id="CHEBI:57805"/>
        <dbReference type="EC" id="2.3.1.35"/>
    </reaction>
</comment>
<comment type="catalytic activity">
    <reaction evidence="1">
        <text>L-glutamate + acetyl-CoA = N-acetyl-L-glutamate + CoA + H(+)</text>
        <dbReference type="Rhea" id="RHEA:24292"/>
        <dbReference type="ChEBI" id="CHEBI:15378"/>
        <dbReference type="ChEBI" id="CHEBI:29985"/>
        <dbReference type="ChEBI" id="CHEBI:44337"/>
        <dbReference type="ChEBI" id="CHEBI:57287"/>
        <dbReference type="ChEBI" id="CHEBI:57288"/>
        <dbReference type="EC" id="2.3.1.1"/>
    </reaction>
</comment>
<comment type="pathway">
    <text evidence="1">Amino-acid biosynthesis; L-arginine biosynthesis; L-ornithine and N-acetyl-L-glutamate from L-glutamate and N(2)-acetyl-L-ornithine (cyclic): step 1/1.</text>
</comment>
<comment type="pathway">
    <text evidence="1">Amino-acid biosynthesis; L-arginine biosynthesis; N(2)-acetyl-L-ornithine from L-glutamate: step 1/4.</text>
</comment>
<comment type="subunit">
    <text evidence="1">Heterodimer of an alpha and a beta chain.</text>
</comment>
<comment type="subcellular location">
    <subcellularLocation>
        <location evidence="1">Mitochondrion matrix</location>
    </subcellularLocation>
</comment>
<comment type="PTM">
    <text evidence="1">The alpha and beta chains are autoproteolytically processed from a single precursor protein within the mitochondrion.</text>
</comment>
<comment type="miscellaneous">
    <text evidence="1">This protein may be expected to contain an N-terminal transit peptide but none has been predicted.</text>
</comment>
<comment type="similarity">
    <text evidence="1">Belongs to the ArgJ family.</text>
</comment>
<organism>
    <name type="scientific">Aspergillus terreus (strain NIH 2624 / FGSC A1156)</name>
    <dbReference type="NCBI Taxonomy" id="341663"/>
    <lineage>
        <taxon>Eukaryota</taxon>
        <taxon>Fungi</taxon>
        <taxon>Dikarya</taxon>
        <taxon>Ascomycota</taxon>
        <taxon>Pezizomycotina</taxon>
        <taxon>Eurotiomycetes</taxon>
        <taxon>Eurotiomycetidae</taxon>
        <taxon>Eurotiales</taxon>
        <taxon>Aspergillaceae</taxon>
        <taxon>Aspergillus</taxon>
        <taxon>Aspergillus subgen. Circumdati</taxon>
    </lineage>
</organism>
<keyword id="KW-0012">Acyltransferase</keyword>
<keyword id="KW-0028">Amino-acid biosynthesis</keyword>
<keyword id="KW-0055">Arginine biosynthesis</keyword>
<keyword id="KW-0068">Autocatalytic cleavage</keyword>
<keyword id="KW-0496">Mitochondrion</keyword>
<keyword id="KW-0511">Multifunctional enzyme</keyword>
<keyword id="KW-1185">Reference proteome</keyword>
<keyword id="KW-0808">Transferase</keyword>
<dbReference type="EC" id="2.3.1.35" evidence="1"/>
<dbReference type="EC" id="2.3.1.1" evidence="1"/>
<dbReference type="EMBL" id="CH476605">
    <property type="protein sequence ID" value="EAU31488.1"/>
    <property type="molecule type" value="Genomic_DNA"/>
</dbReference>
<dbReference type="RefSeq" id="XP_001216936.1">
    <property type="nucleotide sequence ID" value="XM_001216936.1"/>
</dbReference>
<dbReference type="SMR" id="Q0CDB9"/>
<dbReference type="STRING" id="341663.Q0CDB9"/>
<dbReference type="MEROPS" id="T05.001"/>
<dbReference type="EnsemblFungi" id="EAU31488">
    <property type="protein sequence ID" value="EAU31488"/>
    <property type="gene ID" value="ATEG_08315"/>
</dbReference>
<dbReference type="GeneID" id="4353079"/>
<dbReference type="VEuPathDB" id="FungiDB:ATEG_08315"/>
<dbReference type="eggNOG" id="KOG2786">
    <property type="taxonomic scope" value="Eukaryota"/>
</dbReference>
<dbReference type="HOGENOM" id="CLU_027172_1_0_1"/>
<dbReference type="OMA" id="WGRIVMA"/>
<dbReference type="OrthoDB" id="2017946at2759"/>
<dbReference type="UniPathway" id="UPA00068">
    <property type="reaction ID" value="UER00106"/>
</dbReference>
<dbReference type="UniPathway" id="UPA00068">
    <property type="reaction ID" value="UER00111"/>
</dbReference>
<dbReference type="Proteomes" id="UP000007963">
    <property type="component" value="Unassembled WGS sequence"/>
</dbReference>
<dbReference type="GO" id="GO:0005759">
    <property type="term" value="C:mitochondrial matrix"/>
    <property type="evidence" value="ECO:0007669"/>
    <property type="project" value="UniProtKB-SubCell"/>
</dbReference>
<dbReference type="GO" id="GO:0004358">
    <property type="term" value="F:glutamate N-acetyltransferase activity"/>
    <property type="evidence" value="ECO:0007669"/>
    <property type="project" value="UniProtKB-UniRule"/>
</dbReference>
<dbReference type="GO" id="GO:0004042">
    <property type="term" value="F:L-glutamate N-acetyltransferase activity"/>
    <property type="evidence" value="ECO:0007669"/>
    <property type="project" value="UniProtKB-UniRule"/>
</dbReference>
<dbReference type="GO" id="GO:0006526">
    <property type="term" value="P:L-arginine biosynthetic process"/>
    <property type="evidence" value="ECO:0007669"/>
    <property type="project" value="UniProtKB-UniRule"/>
</dbReference>
<dbReference type="GO" id="GO:0006592">
    <property type="term" value="P:ornithine biosynthetic process"/>
    <property type="evidence" value="ECO:0007669"/>
    <property type="project" value="EnsemblFungi"/>
</dbReference>
<dbReference type="CDD" id="cd02152">
    <property type="entry name" value="OAT"/>
    <property type="match status" value="1"/>
</dbReference>
<dbReference type="FunFam" id="3.10.20.340:FF:000002">
    <property type="entry name" value="Arginine biosynthesis bifunctional protein ArgJ, mitochondrial"/>
    <property type="match status" value="1"/>
</dbReference>
<dbReference type="FunFam" id="3.30.2330.10:FF:000001">
    <property type="entry name" value="Arginine biosynthesis bifunctional protein ArgJ, mitochondrial"/>
    <property type="match status" value="1"/>
</dbReference>
<dbReference type="FunFam" id="3.60.70.12:FF:000002">
    <property type="entry name" value="Arginine biosynthesis bifunctional protein ArgJ, mitochondrial"/>
    <property type="match status" value="1"/>
</dbReference>
<dbReference type="Gene3D" id="3.30.2330.10">
    <property type="entry name" value="arginine biosynthesis bifunctional protein suprefamily"/>
    <property type="match status" value="1"/>
</dbReference>
<dbReference type="Gene3D" id="3.10.20.340">
    <property type="entry name" value="ArgJ beta chain, C-terminal domain"/>
    <property type="match status" value="1"/>
</dbReference>
<dbReference type="Gene3D" id="3.60.70.12">
    <property type="entry name" value="L-amino peptidase D-ALA esterase/amidase"/>
    <property type="match status" value="1"/>
</dbReference>
<dbReference type="HAMAP" id="MF_01106">
    <property type="entry name" value="ArgJ"/>
    <property type="match status" value="1"/>
</dbReference>
<dbReference type="InterPro" id="IPR002813">
    <property type="entry name" value="Arg_biosynth_ArgJ"/>
</dbReference>
<dbReference type="InterPro" id="IPR016117">
    <property type="entry name" value="ArgJ-like_dom_sf"/>
</dbReference>
<dbReference type="InterPro" id="IPR042195">
    <property type="entry name" value="ArgJ_beta_C"/>
</dbReference>
<dbReference type="NCBIfam" id="TIGR00120">
    <property type="entry name" value="ArgJ"/>
    <property type="match status" value="1"/>
</dbReference>
<dbReference type="NCBIfam" id="NF003802">
    <property type="entry name" value="PRK05388.1"/>
    <property type="match status" value="1"/>
</dbReference>
<dbReference type="PANTHER" id="PTHR23100">
    <property type="entry name" value="ARGININE BIOSYNTHESIS BIFUNCTIONAL PROTEIN ARGJ"/>
    <property type="match status" value="1"/>
</dbReference>
<dbReference type="PANTHER" id="PTHR23100:SF0">
    <property type="entry name" value="ARGININE BIOSYNTHESIS BIFUNCTIONAL PROTEIN ARGJ, MITOCHONDRIAL"/>
    <property type="match status" value="1"/>
</dbReference>
<dbReference type="Pfam" id="PF01960">
    <property type="entry name" value="ArgJ"/>
    <property type="match status" value="1"/>
</dbReference>
<dbReference type="SUPFAM" id="SSF56266">
    <property type="entry name" value="DmpA/ArgJ-like"/>
    <property type="match status" value="1"/>
</dbReference>
<proteinExistence type="inferred from homology"/>